<evidence type="ECO:0000255" key="1">
    <source>
        <dbReference type="HAMAP-Rule" id="MF_04008"/>
    </source>
</evidence>
<evidence type="ECO:0000256" key="2">
    <source>
        <dbReference type="SAM" id="MobiDB-lite"/>
    </source>
</evidence>
<evidence type="ECO:0000303" key="3">
    <source>
    </source>
</evidence>
<evidence type="ECO:0007829" key="4">
    <source>
        <dbReference type="PDB" id="4V08"/>
    </source>
</evidence>
<evidence type="ECO:0007829" key="5">
    <source>
        <dbReference type="PDB" id="4V0T"/>
    </source>
</evidence>
<reference key="1">
    <citation type="journal article" date="1996" name="Virus Res.">
        <title>The BamHI fragment 9 of pseudorabies virus contains genes homologous to the UL24, UL25, UL26, and UL 26.5 genes of herpes simplex virus type 1.</title>
        <authorList>
            <person name="Dezelee S."/>
            <person name="Bras F."/>
            <person name="Vende P."/>
            <person name="Simonet B."/>
            <person name="Nguyen X."/>
            <person name="Flamand A."/>
            <person name="Masse M.J."/>
        </authorList>
    </citation>
    <scope>NUCLEOTIDE SEQUENCE [GENOMIC DNA]</scope>
</reference>
<reference key="2">
    <citation type="journal article" date="2011" name="PLoS Pathog.">
        <title>A wide extent of inter-strain diversity in virulent and vaccine strains of alphaherpesviruses.</title>
        <authorList>
            <person name="Szpara M.L."/>
            <person name="Tafuri Y.R."/>
            <person name="Parsons L."/>
            <person name="Shamim S.R."/>
            <person name="Verstrepen K.J."/>
            <person name="Legendre M."/>
            <person name="Enquist L.W."/>
        </authorList>
    </citation>
    <scope>NUCLEOTIDE SEQUENCE [GENOMIC DNA]</scope>
</reference>
<reference key="3">
    <citation type="journal article" date="2012" name="J. Virol.">
        <title>Analysis of viral and cellular factors influencing herpesvirus-induced nuclear envelope breakdown.</title>
        <authorList>
            <person name="Grimm K.S."/>
            <person name="Klupp B.G."/>
            <person name="Granzow H."/>
            <person name="Muller F.M."/>
            <person name="Fuchs W."/>
            <person name="Mettenleiter T.C."/>
        </authorList>
    </citation>
    <scope>NUCLEOTIDE SEQUENCE [GENOMIC DNA]</scope>
</reference>
<reference key="4">
    <citation type="journal article" date="2017" name="J. Gen. Virol.">
        <title>Assemblins as maturational proteases in herpesviruses.</title>
        <authorList>
            <person name="Zuehlsdorf M."/>
            <person name="Hinrichs W."/>
        </authorList>
    </citation>
    <scope>REVIEW</scope>
</reference>
<reference key="5">
    <citation type="journal article" date="2015" name="PLoS Pathog.">
        <title>Dimerization-Induced Allosteric Changes of the Oxyanion-Hole Loop Activate the Pseudorabies Virus Assemblin pUL26N, a Herpesvirus Serine Protease.</title>
        <authorList>
            <person name="Zuehlsdorf M."/>
            <person name="Werten S."/>
            <person name="Klupp B.G."/>
            <person name="Palm G.J."/>
            <person name="Mettenleiter T.C."/>
            <person name="Hinrichs W."/>
        </authorList>
    </citation>
    <scope>X-RAY CRYSTALLOGRAPHY (2.03 ANGSTROMS) OF 1-224</scope>
</reference>
<keyword id="KW-0002">3D-structure</keyword>
<keyword id="KW-0877">Alternative promoter usage</keyword>
<keyword id="KW-1035">Host cytoplasm</keyword>
<keyword id="KW-1048">Host nucleus</keyword>
<keyword id="KW-0378">Hydrolase</keyword>
<keyword id="KW-0597">Phosphoprotein</keyword>
<keyword id="KW-0645">Protease</keyword>
<keyword id="KW-0720">Serine protease</keyword>
<keyword id="KW-0118">Viral capsid assembly</keyword>
<keyword id="KW-1188">Viral release from host cell</keyword>
<protein>
    <recommendedName>
        <fullName evidence="1">Capsid scaffolding protein</fullName>
    </recommendedName>
    <alternativeName>
        <fullName>Capsid protein P40</fullName>
    </alternativeName>
    <alternativeName>
        <fullName evidence="1">Protease precursor</fullName>
        <shortName evidence="1">pPR</shortName>
    </alternativeName>
    <alternativeName>
        <fullName>Virion structural protein UL26</fullName>
    </alternativeName>
    <component>
        <recommendedName>
            <fullName evidence="1">Assemblin</fullName>
            <ecNumber evidence="1">3.4.21.97</ecNumber>
        </recommendedName>
        <alternativeName>
            <fullName>Capsid protein VP24</fullName>
        </alternativeName>
        <alternativeName>
            <fullName evidence="1">Protease</fullName>
            <shortName evidence="1">Pr</shortName>
        </alternativeName>
    </component>
    <component>
        <recommendedName>
            <fullName evidence="1">Assembly protein</fullName>
            <shortName evidence="1">AP</shortName>
        </recommendedName>
        <alternativeName>
            <fullName evidence="1">Capsid assembly protein</fullName>
        </alternativeName>
        <alternativeName>
            <fullName>Capsid protein VP22A</fullName>
        </alternativeName>
    </component>
</protein>
<dbReference type="EC" id="3.4.21.97" evidence="1"/>
<dbReference type="EMBL" id="JF797218">
    <property type="protein sequence ID" value="AEM64057.1"/>
    <property type="molecule type" value="Genomic_DNA"/>
</dbReference>
<dbReference type="EMBL" id="JQ809328">
    <property type="protein sequence ID" value="AFI70810.1"/>
    <property type="molecule type" value="Genomic_DNA"/>
</dbReference>
<dbReference type="EMBL" id="KJ717942">
    <property type="protein sequence ID" value="AID18746.1"/>
    <property type="molecule type" value="Genomic_DNA"/>
</dbReference>
<dbReference type="EMBL" id="X95710">
    <property type="protein sequence ID" value="CAA65015.1"/>
    <property type="molecule type" value="Genomic_DNA"/>
</dbReference>
<dbReference type="RefSeq" id="YP_068348.1">
    <property type="nucleotide sequence ID" value="NC_006151.1"/>
</dbReference>
<dbReference type="PDB" id="4CX8">
    <property type="method" value="X-ray"/>
    <property type="resolution" value="2.53 A"/>
    <property type="chains" value="A/B=1-224"/>
</dbReference>
<dbReference type="PDB" id="4V07">
    <property type="method" value="X-ray"/>
    <property type="resolution" value="2.10 A"/>
    <property type="chains" value="A/B=1-224"/>
</dbReference>
<dbReference type="PDB" id="4V08">
    <property type="method" value="X-ray"/>
    <property type="resolution" value="2.03 A"/>
    <property type="chains" value="A/B=1-224"/>
</dbReference>
<dbReference type="PDB" id="4V0T">
    <property type="method" value="X-ray"/>
    <property type="resolution" value="2.05 A"/>
    <property type="chains" value="A/B=1-224"/>
</dbReference>
<dbReference type="PDBsum" id="4CX8"/>
<dbReference type="PDBsum" id="4V07"/>
<dbReference type="PDBsum" id="4V08"/>
<dbReference type="PDBsum" id="4V0T"/>
<dbReference type="SASBDB" id="Q83417"/>
<dbReference type="SMR" id="Q83417"/>
<dbReference type="MEROPS" id="S21.001"/>
<dbReference type="GeneID" id="2952508"/>
<dbReference type="KEGG" id="vg:2952508"/>
<dbReference type="BRENDA" id="3.4.21.97">
    <property type="organism ID" value="5212"/>
</dbReference>
<dbReference type="EvolutionaryTrace" id="Q83417"/>
<dbReference type="Proteomes" id="UP000128830">
    <property type="component" value="Segment"/>
</dbReference>
<dbReference type="Proteomes" id="UP000181035">
    <property type="component" value="Segment"/>
</dbReference>
<dbReference type="Proteomes" id="UP000181576">
    <property type="component" value="Segment"/>
</dbReference>
<dbReference type="GO" id="GO:0030430">
    <property type="term" value="C:host cell cytoplasm"/>
    <property type="evidence" value="ECO:0007669"/>
    <property type="project" value="UniProtKB-SubCell"/>
</dbReference>
<dbReference type="GO" id="GO:0042025">
    <property type="term" value="C:host cell nucleus"/>
    <property type="evidence" value="ECO:0007669"/>
    <property type="project" value="UniProtKB-SubCell"/>
</dbReference>
<dbReference type="GO" id="GO:0042802">
    <property type="term" value="F:identical protein binding"/>
    <property type="evidence" value="ECO:0007669"/>
    <property type="project" value="UniProtKB-UniRule"/>
</dbReference>
<dbReference type="GO" id="GO:0004252">
    <property type="term" value="F:serine-type endopeptidase activity"/>
    <property type="evidence" value="ECO:0007669"/>
    <property type="project" value="UniProtKB-UniRule"/>
</dbReference>
<dbReference type="GO" id="GO:0039708">
    <property type="term" value="P:nuclear capsid assembly"/>
    <property type="evidence" value="ECO:0007669"/>
    <property type="project" value="UniProtKB-ARBA"/>
</dbReference>
<dbReference type="GO" id="GO:0006508">
    <property type="term" value="P:proteolysis"/>
    <property type="evidence" value="ECO:0007669"/>
    <property type="project" value="UniProtKB-KW"/>
</dbReference>
<dbReference type="GO" id="GO:0019076">
    <property type="term" value="P:viral release from host cell"/>
    <property type="evidence" value="ECO:0007669"/>
    <property type="project" value="UniProtKB-UniRule"/>
</dbReference>
<dbReference type="Gene3D" id="3.20.16.10">
    <property type="entry name" value="Herpesvirus/Caudovirus protease domain"/>
    <property type="match status" value="1"/>
</dbReference>
<dbReference type="HAMAP" id="MF_04008">
    <property type="entry name" value="HSV_SCAF"/>
    <property type="match status" value="1"/>
</dbReference>
<dbReference type="InterPro" id="IPR035443">
    <property type="entry name" value="Herpes_virus_sf"/>
</dbReference>
<dbReference type="InterPro" id="IPR001847">
    <property type="entry name" value="Peptidase_S21"/>
</dbReference>
<dbReference type="Pfam" id="PF00716">
    <property type="entry name" value="Peptidase_S21"/>
    <property type="match status" value="1"/>
</dbReference>
<dbReference type="PRINTS" id="PR00236">
    <property type="entry name" value="HSVCAPSIDP40"/>
</dbReference>
<dbReference type="SUPFAM" id="SSF50789">
    <property type="entry name" value="Herpes virus serine proteinase, assemblin"/>
    <property type="match status" value="1"/>
</dbReference>
<name>SCAF_SUHVK</name>
<accession>Q83417</accession>
<proteinExistence type="evidence at protein level"/>
<sequence length="524" mass="54645">MGPVYVSGYLALYDRDGGELALTREIVAAALPPAGPLPINIDHRPRCDIGAVLAVVDDDRGPFFLGVVNCPQLGAVLARAVGPDFFGDMRLSDEERLLYLLSNYLPSASLSSRRLAPGEAPDETLFAHVALCVIGRRVGTIVVYDASPEAAVAPFRQLSARARSELLARAAESPDRERVWHMSEEALTRALLSTAVNNMLLRDRWELVAARRREAGVRGHTYLQATMWAGLLPKSGASPAPGPSAAMAAPPSAAPGDYIFVPAAQYNQLVVNQRPAPSLESQLGAIVSAAMDRRHRRSPSPEPRPPARKRRYDDYAQDNAYYPGEAPPPASDLAAVVSSLQREISHLRAQQLRYPTPYYAPAAPPQLLPPGAVVGHPHPHHAAGALYPPMYAPQPGLHAPPPSPVAHAVPALPGLPGLQGLAAPVAHVPAQVVPQQPVVVQAQPVAVPAAAAAAPAPAPAAAAAAAAPVQAAAPAAPASAPQPPVQASVSAPADVSAGTIDASSAAVACQRGADIFVSQMMSQR</sequence>
<comment type="function">
    <molecule>Capsid scaffolding protein</molecule>
    <text evidence="1">Acts as a scaffold protein by binding major capsid protein in the cytoplasm, inducing the nuclear localization of both proteins. Multimerizes in the nucleus such as major capsid protein forms the icosahedral T=16 capsid. Autocatalytic cleavage releases the assembly protein, and subsequently abolishes interaction with major capsid protein. Cleavages products are evicted from the capsid before or during DNA packaging.</text>
</comment>
<comment type="function">
    <molecule>Assemblin</molecule>
    <text evidence="1">Protease that plays an essential role in virion assembly within the nucleus. Catalyzes the cleavage of the assembly protein after formation of the spherical procapsid. By that cleavage, the capsid matures and gains its icosahedral shape. The cleavage sites seem to include -Ala-Ser-, -Ala-Ala-, as well as Ala-Thr bonds. Assemblin and cleavages products are evicted from the capsid before or during DNA packaging.</text>
</comment>
<comment type="function">
    <molecule>Assembly protein</molecule>
    <text evidence="1">Plays a major role in capsid assembly. Acts as a scaffold protein by binding major capsid protein. Multimerizes in the nucleus such as major capsid protein forms the icosahedral T=16 capsid. Cleaved by assemblin after capsid completion. The cleavages products are evicted from the capsid before or during DNA packaging.</text>
</comment>
<comment type="catalytic activity">
    <molecule>Assemblin</molecule>
    <reaction evidence="1">
        <text>Cleaves -Ala-|-Ser- and -Ala-|-Ala- bonds in the scaffold protein.</text>
        <dbReference type="EC" id="3.4.21.97"/>
    </reaction>
</comment>
<comment type="subunit">
    <molecule>Capsid scaffolding protein</molecule>
    <text evidence="1">Homomultimer. Interacts with major capsid protein.</text>
</comment>
<comment type="subunit">
    <molecule>Assemblin</molecule>
    <text evidence="1">Exists in a monomer-dimer equilibrium with the dimer being the active species.</text>
</comment>
<comment type="subunit">
    <molecule>Assembly protein</molecule>
    <text evidence="1">Homomultimer. Interacts with major capsid protein.</text>
</comment>
<comment type="subcellular location">
    <molecule>Capsid scaffolding protein</molecule>
    <subcellularLocation>
        <location evidence="1">Host cytoplasm</location>
    </subcellularLocation>
</comment>
<comment type="subcellular location">
    <molecule>Assemblin</molecule>
    <subcellularLocation>
        <location evidence="1">Host nucleus</location>
    </subcellularLocation>
</comment>
<comment type="subcellular location">
    <molecule>Assembly protein</molecule>
    <subcellularLocation>
        <location evidence="1">Host nucleus</location>
    </subcellularLocation>
</comment>
<comment type="alternative products">
    <event type="alternative promoter"/>
    <isoform>
        <id>Q83417-1</id>
        <name>Capsid scaffolding protein</name>
        <name>pPR</name>
        <name>UL26</name>
        <sequence type="displayed"/>
    </isoform>
    <isoform>
        <id>Q83417-2</id>
        <name>pAP</name>
        <name>Assembly protein</name>
        <name>UL26.5 protein</name>
        <sequence type="described" ref="VSP_057942"/>
    </isoform>
</comment>
<comment type="domain">
    <text evidence="1">Region of interaction between pPR and pAP is called Amino conserved domain (ACD). The region of interaction with major capsid protein is called carboxyl conserved domain (CCD).</text>
</comment>
<comment type="PTM">
    <molecule>Capsid scaffolding protein</molecule>
    <text evidence="1">Capsid scaffolding protein is cleaved by assemblin after formation of the spherical procapsid. As a result, the capsid obtains its mature, icosahedral shape. Cleavages occur at two or more sites: release (R-site) and maturation (M-site).</text>
</comment>
<comment type="similarity">
    <text evidence="1">Belongs to the herpesviridae capsid scaffolding protein family.</text>
</comment>
<organism>
    <name type="scientific">Suid herpesvirus 1 (strain Kaplan)</name>
    <name type="common">SuHV-1</name>
    <name type="synonym">Pseudorabies virus (strain Kaplan)</name>
    <dbReference type="NCBI Taxonomy" id="33703"/>
    <lineage>
        <taxon>Viruses</taxon>
        <taxon>Duplodnaviria</taxon>
        <taxon>Heunggongvirae</taxon>
        <taxon>Peploviricota</taxon>
        <taxon>Herviviricetes</taxon>
        <taxon>Herpesvirales</taxon>
        <taxon>Orthoherpesviridae</taxon>
        <taxon>Alphaherpesvirinae</taxon>
        <taxon>Varicellovirus</taxon>
        <taxon>Varicellovirus suidalpha1</taxon>
        <taxon>Suid herpesvirus 1</taxon>
    </lineage>
</organism>
<feature type="chain" id="PRO_0000434531" description="Capsid scaffolding protein">
    <location>
        <begin position="1"/>
        <end position="524"/>
    </location>
</feature>
<feature type="chain" id="PRO_0000434532" description="Assemblin" evidence="1">
    <location>
        <begin position="1"/>
        <end position="225"/>
    </location>
</feature>
<feature type="chain" id="PRO_0000434533" description="Assembly protein" evidence="1">
    <location>
        <begin position="226"/>
        <end position="524"/>
    </location>
</feature>
<feature type="region of interest" description="Interaction with pAP" evidence="1">
    <location>
        <begin position="256"/>
        <end position="275"/>
    </location>
</feature>
<feature type="region of interest" description="Disordered" evidence="2">
    <location>
        <begin position="289"/>
        <end position="311"/>
    </location>
</feature>
<feature type="region of interest" description="Interaction with major capsid protein" evidence="1">
    <location>
        <begin position="504"/>
        <end position="524"/>
    </location>
</feature>
<feature type="active site" description="Charge relay system" evidence="1">
    <location>
        <position position="43"/>
    </location>
</feature>
<feature type="active site" description="Charge relay system" evidence="1">
    <location>
        <position position="109"/>
    </location>
</feature>
<feature type="active site" description="Charge relay system" evidence="1">
    <location>
        <position position="128"/>
    </location>
</feature>
<feature type="site" description="Cleavage; by assemblin; Release site" evidence="1">
    <location>
        <begin position="225"/>
        <end position="226"/>
    </location>
</feature>
<feature type="site" description="Cleavage; by assemblin; Maturation site" evidence="3">
    <location>
        <begin position="502"/>
        <end position="503"/>
    </location>
</feature>
<feature type="splice variant" id="VSP_057942" description="In isoform pAP.">
    <location>
        <begin position="1"/>
        <end position="246"/>
    </location>
</feature>
<feature type="strand" evidence="4">
    <location>
        <begin position="4"/>
        <end position="10"/>
    </location>
</feature>
<feature type="helix" evidence="4">
    <location>
        <begin position="18"/>
        <end position="20"/>
    </location>
</feature>
<feature type="helix" evidence="4">
    <location>
        <begin position="24"/>
        <end position="30"/>
    </location>
</feature>
<feature type="strand" evidence="4">
    <location>
        <begin position="38"/>
        <end position="41"/>
    </location>
</feature>
<feature type="strand" evidence="4">
    <location>
        <begin position="48"/>
        <end position="58"/>
    </location>
</feature>
<feature type="strand" evidence="4">
    <location>
        <begin position="61"/>
        <end position="68"/>
    </location>
</feature>
<feature type="helix" evidence="4">
    <location>
        <begin position="71"/>
        <end position="80"/>
    </location>
</feature>
<feature type="turn" evidence="4">
    <location>
        <begin position="83"/>
        <end position="88"/>
    </location>
</feature>
<feature type="helix" evidence="4">
    <location>
        <begin position="93"/>
        <end position="104"/>
    </location>
</feature>
<feature type="strand" evidence="4">
    <location>
        <begin position="107"/>
        <end position="112"/>
    </location>
</feature>
<feature type="strand" evidence="4">
    <location>
        <begin position="126"/>
        <end position="134"/>
    </location>
</feature>
<feature type="strand" evidence="4">
    <location>
        <begin position="143"/>
        <end position="147"/>
    </location>
</feature>
<feature type="helix" evidence="4">
    <location>
        <begin position="148"/>
        <end position="152"/>
    </location>
</feature>
<feature type="helix" evidence="4">
    <location>
        <begin position="160"/>
        <end position="172"/>
    </location>
</feature>
<feature type="turn" evidence="4">
    <location>
        <begin position="174"/>
        <end position="177"/>
    </location>
</feature>
<feature type="helix" evidence="4">
    <location>
        <begin position="184"/>
        <end position="198"/>
    </location>
</feature>
<feature type="helix" evidence="4">
    <location>
        <begin position="204"/>
        <end position="215"/>
    </location>
</feature>
<feature type="strand" evidence="5">
    <location>
        <begin position="220"/>
        <end position="222"/>
    </location>
</feature>
<organismHost>
    <name type="scientific">Sus scrofa</name>
    <name type="common">Pig</name>
    <dbReference type="NCBI Taxonomy" id="9823"/>
</organismHost>